<dbReference type="EC" id="3.1.-.-" evidence="1"/>
<dbReference type="EMBL" id="CP001287">
    <property type="protein sequence ID" value="ACK65980.1"/>
    <property type="molecule type" value="Genomic_DNA"/>
</dbReference>
<dbReference type="RefSeq" id="WP_012595252.1">
    <property type="nucleotide sequence ID" value="NC_011726.1"/>
</dbReference>
<dbReference type="SMR" id="B7JY16"/>
<dbReference type="STRING" id="41431.PCC8801_1942"/>
<dbReference type="KEGG" id="cyp:PCC8801_1942"/>
<dbReference type="eggNOG" id="COG0816">
    <property type="taxonomic scope" value="Bacteria"/>
</dbReference>
<dbReference type="HOGENOM" id="CLU_098240_2_0_3"/>
<dbReference type="OrthoDB" id="9796140at2"/>
<dbReference type="Proteomes" id="UP000008204">
    <property type="component" value="Chromosome"/>
</dbReference>
<dbReference type="GO" id="GO:0005829">
    <property type="term" value="C:cytosol"/>
    <property type="evidence" value="ECO:0007669"/>
    <property type="project" value="TreeGrafter"/>
</dbReference>
<dbReference type="GO" id="GO:0004518">
    <property type="term" value="F:nuclease activity"/>
    <property type="evidence" value="ECO:0007669"/>
    <property type="project" value="UniProtKB-KW"/>
</dbReference>
<dbReference type="GO" id="GO:0000967">
    <property type="term" value="P:rRNA 5'-end processing"/>
    <property type="evidence" value="ECO:0007669"/>
    <property type="project" value="UniProtKB-UniRule"/>
</dbReference>
<dbReference type="CDD" id="cd16964">
    <property type="entry name" value="YqgF"/>
    <property type="match status" value="1"/>
</dbReference>
<dbReference type="Gene3D" id="3.30.420.140">
    <property type="entry name" value="YqgF/RNase H-like domain"/>
    <property type="match status" value="1"/>
</dbReference>
<dbReference type="HAMAP" id="MF_00651">
    <property type="entry name" value="Nuclease_YqgF"/>
    <property type="match status" value="1"/>
</dbReference>
<dbReference type="InterPro" id="IPR012337">
    <property type="entry name" value="RNaseH-like_sf"/>
</dbReference>
<dbReference type="InterPro" id="IPR005227">
    <property type="entry name" value="YqgF"/>
</dbReference>
<dbReference type="InterPro" id="IPR006641">
    <property type="entry name" value="YqgF/RNaseH-like_dom"/>
</dbReference>
<dbReference type="InterPro" id="IPR037027">
    <property type="entry name" value="YqgF/RNaseH-like_dom_sf"/>
</dbReference>
<dbReference type="NCBIfam" id="TIGR00250">
    <property type="entry name" value="RNAse_H_YqgF"/>
    <property type="match status" value="1"/>
</dbReference>
<dbReference type="PANTHER" id="PTHR33317">
    <property type="entry name" value="POLYNUCLEOTIDYL TRANSFERASE, RIBONUCLEASE H-LIKE SUPERFAMILY PROTEIN"/>
    <property type="match status" value="1"/>
</dbReference>
<dbReference type="PANTHER" id="PTHR33317:SF4">
    <property type="entry name" value="POLYNUCLEOTIDYL TRANSFERASE, RIBONUCLEASE H-LIKE SUPERFAMILY PROTEIN"/>
    <property type="match status" value="1"/>
</dbReference>
<dbReference type="Pfam" id="PF03652">
    <property type="entry name" value="RuvX"/>
    <property type="match status" value="1"/>
</dbReference>
<dbReference type="SMART" id="SM00732">
    <property type="entry name" value="YqgFc"/>
    <property type="match status" value="1"/>
</dbReference>
<dbReference type="SUPFAM" id="SSF53098">
    <property type="entry name" value="Ribonuclease H-like"/>
    <property type="match status" value="1"/>
</dbReference>
<protein>
    <recommendedName>
        <fullName evidence="1">Putative pre-16S rRNA nuclease</fullName>
        <ecNumber evidence="1">3.1.-.-</ecNumber>
    </recommendedName>
</protein>
<sequence length="139" mass="15644">MERISALGLDIGKKRIGVAGCDGTGLIATGLTTIERTSFQSDVEQLHQWVKEREAQILVVGLPYSMDGSLGFQAKQVQKFTRRISHVLQLPVEYVDERLTSVEAEAQLKSQKRFSTWDKGAIDRQAATIILQQWLDSRR</sequence>
<gene>
    <name type="ordered locus">PCC8801_1942</name>
</gene>
<proteinExistence type="inferred from homology"/>
<name>YQGF_RIPO1</name>
<evidence type="ECO:0000255" key="1">
    <source>
        <dbReference type="HAMAP-Rule" id="MF_00651"/>
    </source>
</evidence>
<comment type="function">
    <text evidence="1">Could be a nuclease involved in processing of the 5'-end of pre-16S rRNA.</text>
</comment>
<comment type="subcellular location">
    <subcellularLocation>
        <location evidence="1">Cytoplasm</location>
    </subcellularLocation>
</comment>
<comment type="similarity">
    <text evidence="1">Belongs to the YqgF nuclease family.</text>
</comment>
<organism>
    <name type="scientific">Rippkaea orientalis (strain PCC 8801 / RF-1)</name>
    <name type="common">Cyanothece sp. (strain PCC 8801)</name>
    <dbReference type="NCBI Taxonomy" id="41431"/>
    <lineage>
        <taxon>Bacteria</taxon>
        <taxon>Bacillati</taxon>
        <taxon>Cyanobacteriota</taxon>
        <taxon>Cyanophyceae</taxon>
        <taxon>Oscillatoriophycideae</taxon>
        <taxon>Chroococcales</taxon>
        <taxon>Aphanothecaceae</taxon>
        <taxon>Rippkaea</taxon>
        <taxon>Rippkaea orientalis</taxon>
    </lineage>
</organism>
<feature type="chain" id="PRO_1000131022" description="Putative pre-16S rRNA nuclease">
    <location>
        <begin position="1"/>
        <end position="139"/>
    </location>
</feature>
<reference key="1">
    <citation type="journal article" date="2011" name="MBio">
        <title>Novel metabolic attributes of the genus Cyanothece, comprising a group of unicellular nitrogen-fixing Cyanobacteria.</title>
        <authorList>
            <person name="Bandyopadhyay A."/>
            <person name="Elvitigala T."/>
            <person name="Welsh E."/>
            <person name="Stockel J."/>
            <person name="Liberton M."/>
            <person name="Min H."/>
            <person name="Sherman L.A."/>
            <person name="Pakrasi H.B."/>
        </authorList>
    </citation>
    <scope>NUCLEOTIDE SEQUENCE [LARGE SCALE GENOMIC DNA]</scope>
    <source>
        <strain>PCC 8801 / RF-1</strain>
    </source>
</reference>
<keyword id="KW-0963">Cytoplasm</keyword>
<keyword id="KW-0378">Hydrolase</keyword>
<keyword id="KW-0540">Nuclease</keyword>
<keyword id="KW-1185">Reference proteome</keyword>
<keyword id="KW-0690">Ribosome biogenesis</keyword>
<accession>B7JY16</accession>